<gene>
    <name type="primary">lasI</name>
    <name type="ordered locus">PA1432</name>
</gene>
<evidence type="ECO:0000255" key="1">
    <source>
        <dbReference type="PROSITE-ProRule" id="PRU00533"/>
    </source>
</evidence>
<evidence type="ECO:0007829" key="2">
    <source>
        <dbReference type="PDB" id="1RO5"/>
    </source>
</evidence>
<sequence>MIVQIGRREEFDKKLLGEMHKLRAQVFKERKGWDVSVIDEMEIDGYDALSPYYMLIQEDTPEAQVFGCWRILDTTGPYMLKNTFPELLHGKEAPCSPHIWELSRFAINSGQKGSLGFSDCTLEAMRALARYSLQNDIQTLVTVTTVGVEKMMIRAGLDVSRFGPHLKIGIERAVALRIELNAKTQIALYGGVLVEQRLAVS</sequence>
<comment type="function">
    <text>Required for the synthesis of PAI consisting of 3-oxo-N-(tetrahydro-2-oxo-3-furanyl)-dodecanamide also known as N-(3-oxododecanoyl)homoserine lactone, an autoinducer molecule which binds to LasR and thus acts in elastase biosynthesis regulation.</text>
</comment>
<comment type="catalytic activity">
    <reaction>
        <text>a fatty acyl-[ACP] + S-adenosyl-L-methionine = an N-acyl-L-homoserine lactone + S-methyl-5'-thioadenosine + holo-[ACP] + H(+)</text>
        <dbReference type="Rhea" id="RHEA:10096"/>
        <dbReference type="Rhea" id="RHEA-COMP:9685"/>
        <dbReference type="Rhea" id="RHEA-COMP:14125"/>
        <dbReference type="ChEBI" id="CHEBI:15378"/>
        <dbReference type="ChEBI" id="CHEBI:17509"/>
        <dbReference type="ChEBI" id="CHEBI:55474"/>
        <dbReference type="ChEBI" id="CHEBI:59789"/>
        <dbReference type="ChEBI" id="CHEBI:64479"/>
        <dbReference type="ChEBI" id="CHEBI:138651"/>
        <dbReference type="EC" id="2.3.1.184"/>
    </reaction>
</comment>
<comment type="similarity">
    <text evidence="1">Belongs to the autoinducer synthase family.</text>
</comment>
<protein>
    <recommendedName>
        <fullName>Acyl-homoserine-lactone synthase</fullName>
        <ecNumber>2.3.1.184</ecNumber>
    </recommendedName>
    <alternativeName>
        <fullName>Autoinducer synthesis protein LasI</fullName>
    </alternativeName>
</protein>
<dbReference type="EC" id="2.3.1.184"/>
<dbReference type="EMBL" id="L04681">
    <property type="protein sequence ID" value="AAA25875.1"/>
    <property type="molecule type" value="Genomic_DNA"/>
</dbReference>
<dbReference type="EMBL" id="AE004091">
    <property type="protein sequence ID" value="AAG04821.1"/>
    <property type="molecule type" value="Genomic_DNA"/>
</dbReference>
<dbReference type="PIR" id="G83467">
    <property type="entry name" value="G83467"/>
</dbReference>
<dbReference type="RefSeq" id="NP_250123.1">
    <property type="nucleotide sequence ID" value="NC_002516.2"/>
</dbReference>
<dbReference type="RefSeq" id="WP_003083017.1">
    <property type="nucleotide sequence ID" value="NZ_QZGE01000005.1"/>
</dbReference>
<dbReference type="PDB" id="1RO5">
    <property type="method" value="X-ray"/>
    <property type="resolution" value="2.30 A"/>
    <property type="chains" value="A=1-201"/>
</dbReference>
<dbReference type="PDBsum" id="1RO5"/>
<dbReference type="SMR" id="P33883"/>
<dbReference type="STRING" id="208964.PA1432"/>
<dbReference type="ChEMBL" id="CHEMBL1795157"/>
<dbReference type="PaxDb" id="208964-PA1432"/>
<dbReference type="DNASU" id="881777"/>
<dbReference type="GeneID" id="881777"/>
<dbReference type="KEGG" id="pae:PA1432"/>
<dbReference type="PATRIC" id="fig|208964.12.peg.1481"/>
<dbReference type="PseudoCAP" id="PA1432"/>
<dbReference type="HOGENOM" id="CLU_085711_4_0_6"/>
<dbReference type="InParanoid" id="P33883"/>
<dbReference type="OrthoDB" id="6023281at2"/>
<dbReference type="PhylomeDB" id="P33883"/>
<dbReference type="BioCyc" id="MetaCyc:MONOMER-14567"/>
<dbReference type="BioCyc" id="PAER208964:G1FZ6-1458-MONOMER"/>
<dbReference type="BRENDA" id="2.3.1.184">
    <property type="organism ID" value="5087"/>
</dbReference>
<dbReference type="EvolutionaryTrace" id="P33883"/>
<dbReference type="PHI-base" id="PHI:10790"/>
<dbReference type="PHI-base" id="PHI:12084"/>
<dbReference type="PHI-base" id="PHI:6997"/>
<dbReference type="Proteomes" id="UP000002438">
    <property type="component" value="Chromosome"/>
</dbReference>
<dbReference type="GO" id="GO:0061579">
    <property type="term" value="F:N-acyl homoserine lactone synthase activity"/>
    <property type="evidence" value="ECO:0007669"/>
    <property type="project" value="UniProtKB-EC"/>
</dbReference>
<dbReference type="GO" id="GO:0009372">
    <property type="term" value="P:quorum sensing"/>
    <property type="evidence" value="ECO:0007669"/>
    <property type="project" value="UniProtKB-KW"/>
</dbReference>
<dbReference type="GO" id="GO:0007165">
    <property type="term" value="P:signal transduction"/>
    <property type="evidence" value="ECO:0000314"/>
    <property type="project" value="PseudoCAP"/>
</dbReference>
<dbReference type="Gene3D" id="3.40.630.30">
    <property type="match status" value="1"/>
</dbReference>
<dbReference type="InterPro" id="IPR016181">
    <property type="entry name" value="Acyl_CoA_acyltransferase"/>
</dbReference>
<dbReference type="InterPro" id="IPR018311">
    <property type="entry name" value="Autoind_synth_CS"/>
</dbReference>
<dbReference type="InterPro" id="IPR001690">
    <property type="entry name" value="Autoind_synthase"/>
</dbReference>
<dbReference type="PANTHER" id="PTHR39322">
    <property type="entry name" value="ACYL-HOMOSERINE-LACTONE SYNTHASE"/>
    <property type="match status" value="1"/>
</dbReference>
<dbReference type="PANTHER" id="PTHR39322:SF1">
    <property type="entry name" value="ISOVALERYL-HOMOSERINE LACTONE SYNTHASE"/>
    <property type="match status" value="1"/>
</dbReference>
<dbReference type="Pfam" id="PF00765">
    <property type="entry name" value="Autoind_synth"/>
    <property type="match status" value="1"/>
</dbReference>
<dbReference type="PRINTS" id="PR01549">
    <property type="entry name" value="AUTOINDCRSYN"/>
</dbReference>
<dbReference type="SUPFAM" id="SSF55729">
    <property type="entry name" value="Acyl-CoA N-acyltransferases (Nat)"/>
    <property type="match status" value="1"/>
</dbReference>
<dbReference type="PROSITE" id="PS00949">
    <property type="entry name" value="AUTOINDUCER_SYNTH_1"/>
    <property type="match status" value="1"/>
</dbReference>
<dbReference type="PROSITE" id="PS51187">
    <property type="entry name" value="AUTOINDUCER_SYNTH_2"/>
    <property type="match status" value="1"/>
</dbReference>
<organism>
    <name type="scientific">Pseudomonas aeruginosa (strain ATCC 15692 / DSM 22644 / CIP 104116 / JCM 14847 / LMG 12228 / 1C / PRS 101 / PAO1)</name>
    <dbReference type="NCBI Taxonomy" id="208964"/>
    <lineage>
        <taxon>Bacteria</taxon>
        <taxon>Pseudomonadati</taxon>
        <taxon>Pseudomonadota</taxon>
        <taxon>Gammaproteobacteria</taxon>
        <taxon>Pseudomonadales</taxon>
        <taxon>Pseudomonadaceae</taxon>
        <taxon>Pseudomonas</taxon>
    </lineage>
</organism>
<reference key="1">
    <citation type="journal article" date="1993" name="Science">
        <title>Expression of Pseudomonas aeruginosa virulence genes requires cell-to-cell communication.</title>
        <authorList>
            <person name="Passador L."/>
            <person name="Cook J.M."/>
            <person name="Gambello M.J."/>
            <person name="Rust L."/>
            <person name="Iglewski B.H."/>
        </authorList>
    </citation>
    <scope>NUCLEOTIDE SEQUENCE [GENOMIC DNA]</scope>
    <source>
        <strain>ATCC 15692 / DSM 22644 / CIP 104116 / JCM 14847 / LMG 12228 / 1C / PRS 101 / PAO1</strain>
    </source>
</reference>
<reference key="2">
    <citation type="journal article" date="2000" name="Nature">
        <title>Complete genome sequence of Pseudomonas aeruginosa PAO1, an opportunistic pathogen.</title>
        <authorList>
            <person name="Stover C.K."/>
            <person name="Pham X.-Q.T."/>
            <person name="Erwin A.L."/>
            <person name="Mizoguchi S.D."/>
            <person name="Warrener P."/>
            <person name="Hickey M.J."/>
            <person name="Brinkman F.S.L."/>
            <person name="Hufnagle W.O."/>
            <person name="Kowalik D.J."/>
            <person name="Lagrou M."/>
            <person name="Garber R.L."/>
            <person name="Goltry L."/>
            <person name="Tolentino E."/>
            <person name="Westbrock-Wadman S."/>
            <person name="Yuan Y."/>
            <person name="Brody L.L."/>
            <person name="Coulter S.N."/>
            <person name="Folger K.R."/>
            <person name="Kas A."/>
            <person name="Larbig K."/>
            <person name="Lim R.M."/>
            <person name="Smith K.A."/>
            <person name="Spencer D.H."/>
            <person name="Wong G.K.-S."/>
            <person name="Wu Z."/>
            <person name="Paulsen I.T."/>
            <person name="Reizer J."/>
            <person name="Saier M.H. Jr."/>
            <person name="Hancock R.E.W."/>
            <person name="Lory S."/>
            <person name="Olson M.V."/>
        </authorList>
    </citation>
    <scope>NUCLEOTIDE SEQUENCE [LARGE SCALE GENOMIC DNA]</scope>
    <source>
        <strain>ATCC 15692 / DSM 22644 / CIP 104116 / JCM 14847 / LMG 12228 / 1C / PRS 101 / PAO1</strain>
    </source>
</reference>
<reference key="3">
    <citation type="journal article" date="1994" name="Proc. Natl. Acad. Sci. U.S.A.">
        <title>Structure of the autoinducer required for expression of Pseudomonas aeruginosa virulence genes.</title>
        <authorList>
            <person name="Pearson J.P."/>
            <person name="Gray K."/>
            <person name="Passador L."/>
            <person name="Tucker K.D."/>
            <person name="Eberhard A."/>
            <person name="Iglewski B.H."/>
            <person name="Greenberg E.P."/>
        </authorList>
    </citation>
    <scope>STRUCTURE OF INDUCER</scope>
</reference>
<keyword id="KW-0002">3D-structure</keyword>
<keyword id="KW-0071">Autoinducer synthesis</keyword>
<keyword id="KW-0673">Quorum sensing</keyword>
<keyword id="KW-1185">Reference proteome</keyword>
<keyword id="KW-0949">S-adenosyl-L-methionine</keyword>
<keyword id="KW-0808">Transferase</keyword>
<proteinExistence type="evidence at protein level"/>
<accession>P33883</accession>
<name>LASI_PSEAE</name>
<feature type="chain" id="PRO_0000210887" description="Acyl-homoserine-lactone synthase">
    <location>
        <begin position="1"/>
        <end position="201"/>
    </location>
</feature>
<feature type="strand" evidence="2">
    <location>
        <begin position="2"/>
        <end position="7"/>
    </location>
</feature>
<feature type="helix" evidence="2">
    <location>
        <begin position="8"/>
        <end position="10"/>
    </location>
</feature>
<feature type="helix" evidence="2">
    <location>
        <begin position="13"/>
        <end position="27"/>
    </location>
</feature>
<feature type="strand" evidence="2">
    <location>
        <begin position="31"/>
        <end position="33"/>
    </location>
</feature>
<feature type="helix" evidence="2">
    <location>
        <begin position="45"/>
        <end position="48"/>
    </location>
</feature>
<feature type="strand" evidence="2">
    <location>
        <begin position="52"/>
        <end position="58"/>
    </location>
</feature>
<feature type="strand" evidence="2">
    <location>
        <begin position="64"/>
        <end position="73"/>
    </location>
</feature>
<feature type="helix" evidence="2">
    <location>
        <begin position="79"/>
        <end position="82"/>
    </location>
</feature>
<feature type="helix" evidence="2">
    <location>
        <begin position="85"/>
        <end position="88"/>
    </location>
</feature>
<feature type="strand" evidence="2">
    <location>
        <begin position="99"/>
        <end position="107"/>
    </location>
</feature>
<feature type="helix" evidence="2">
    <location>
        <begin position="118"/>
        <end position="133"/>
    </location>
</feature>
<feature type="turn" evidence="2">
    <location>
        <begin position="134"/>
        <end position="136"/>
    </location>
</feature>
<feature type="strand" evidence="2">
    <location>
        <begin position="139"/>
        <end position="145"/>
    </location>
</feature>
<feature type="helix" evidence="2">
    <location>
        <begin position="146"/>
        <end position="154"/>
    </location>
</feature>
<feature type="strand" evidence="2">
    <location>
        <begin position="158"/>
        <end position="163"/>
    </location>
</feature>
<feature type="strand" evidence="2">
    <location>
        <begin position="166"/>
        <end position="168"/>
    </location>
</feature>
<feature type="strand" evidence="2">
    <location>
        <begin position="171"/>
        <end position="179"/>
    </location>
</feature>
<feature type="helix" evidence="2">
    <location>
        <begin position="182"/>
        <end position="189"/>
    </location>
</feature>